<organism>
    <name type="scientific">Baumannia cicadellinicola subsp. Homalodisca coagulata</name>
    <dbReference type="NCBI Taxonomy" id="374463"/>
    <lineage>
        <taxon>Bacteria</taxon>
        <taxon>Pseudomonadati</taxon>
        <taxon>Pseudomonadota</taxon>
        <taxon>Gammaproteobacteria</taxon>
        <taxon>Candidatus Palibaumannia</taxon>
    </lineage>
</organism>
<keyword id="KW-0012">Acyltransferase</keyword>
<keyword id="KW-1003">Cell membrane</keyword>
<keyword id="KW-0444">Lipid biosynthesis</keyword>
<keyword id="KW-0443">Lipid metabolism</keyword>
<keyword id="KW-0472">Membrane</keyword>
<keyword id="KW-0594">Phospholipid biosynthesis</keyword>
<keyword id="KW-1208">Phospholipid metabolism</keyword>
<keyword id="KW-1185">Reference proteome</keyword>
<keyword id="KW-0808">Transferase</keyword>
<protein>
    <recommendedName>
        <fullName evidence="1">Glycerol-3-phosphate acyltransferase</fullName>
        <shortName evidence="1">GPAT</shortName>
        <ecNumber evidence="1">2.3.1.15</ecNumber>
    </recommendedName>
</protein>
<dbReference type="EC" id="2.3.1.15" evidence="1"/>
<dbReference type="EMBL" id="CP000238">
    <property type="protein sequence ID" value="ABF13834.1"/>
    <property type="molecule type" value="Genomic_DNA"/>
</dbReference>
<dbReference type="RefSeq" id="WP_011520232.1">
    <property type="nucleotide sequence ID" value="NC_007984.1"/>
</dbReference>
<dbReference type="STRING" id="374463.BCI_0020"/>
<dbReference type="KEGG" id="bci:BCI_0020"/>
<dbReference type="HOGENOM" id="CLU_015407_0_0_6"/>
<dbReference type="OrthoDB" id="335193at2"/>
<dbReference type="UniPathway" id="UPA00557">
    <property type="reaction ID" value="UER00612"/>
</dbReference>
<dbReference type="Proteomes" id="UP000002427">
    <property type="component" value="Chromosome"/>
</dbReference>
<dbReference type="GO" id="GO:0005886">
    <property type="term" value="C:plasma membrane"/>
    <property type="evidence" value="ECO:0007669"/>
    <property type="project" value="UniProtKB-SubCell"/>
</dbReference>
<dbReference type="GO" id="GO:0004366">
    <property type="term" value="F:glycerol-3-phosphate O-acyltransferase activity"/>
    <property type="evidence" value="ECO:0007669"/>
    <property type="project" value="UniProtKB-UniRule"/>
</dbReference>
<dbReference type="GO" id="GO:0016024">
    <property type="term" value="P:CDP-diacylglycerol biosynthetic process"/>
    <property type="evidence" value="ECO:0007669"/>
    <property type="project" value="UniProtKB-UniRule"/>
</dbReference>
<dbReference type="GO" id="GO:0006631">
    <property type="term" value="P:fatty acid metabolic process"/>
    <property type="evidence" value="ECO:0007669"/>
    <property type="project" value="TreeGrafter"/>
</dbReference>
<dbReference type="CDD" id="cd07993">
    <property type="entry name" value="LPLAT_DHAPAT-like"/>
    <property type="match status" value="1"/>
</dbReference>
<dbReference type="HAMAP" id="MF_00393">
    <property type="entry name" value="Glyc3P_acyltrans"/>
    <property type="match status" value="1"/>
</dbReference>
<dbReference type="InterPro" id="IPR022284">
    <property type="entry name" value="GPAT/DHAPAT"/>
</dbReference>
<dbReference type="InterPro" id="IPR045520">
    <property type="entry name" value="GPAT/DHAPAT_C"/>
</dbReference>
<dbReference type="InterPro" id="IPR041728">
    <property type="entry name" value="GPAT/DHAPAT_LPLAT"/>
</dbReference>
<dbReference type="InterPro" id="IPR028354">
    <property type="entry name" value="GPAT_PlsB"/>
</dbReference>
<dbReference type="InterPro" id="IPR002123">
    <property type="entry name" value="Plipid/glycerol_acylTrfase"/>
</dbReference>
<dbReference type="NCBIfam" id="TIGR03703">
    <property type="entry name" value="plsB"/>
    <property type="match status" value="1"/>
</dbReference>
<dbReference type="NCBIfam" id="NF003441">
    <property type="entry name" value="PRK04974.1"/>
    <property type="match status" value="1"/>
</dbReference>
<dbReference type="PANTHER" id="PTHR12563:SF17">
    <property type="entry name" value="DIHYDROXYACETONE PHOSPHATE ACYLTRANSFERASE"/>
    <property type="match status" value="1"/>
</dbReference>
<dbReference type="PANTHER" id="PTHR12563">
    <property type="entry name" value="GLYCEROL-3-PHOSPHATE ACYLTRANSFERASE"/>
    <property type="match status" value="1"/>
</dbReference>
<dbReference type="Pfam" id="PF01553">
    <property type="entry name" value="Acyltransferase"/>
    <property type="match status" value="1"/>
</dbReference>
<dbReference type="Pfam" id="PF19277">
    <property type="entry name" value="GPAT_C"/>
    <property type="match status" value="1"/>
</dbReference>
<dbReference type="PIRSF" id="PIRSF500064">
    <property type="entry name" value="GPAT"/>
    <property type="match status" value="1"/>
</dbReference>
<dbReference type="PIRSF" id="PIRSF000437">
    <property type="entry name" value="GPAT_DHAPAT"/>
    <property type="match status" value="1"/>
</dbReference>
<dbReference type="SMART" id="SM00563">
    <property type="entry name" value="PlsC"/>
    <property type="match status" value="1"/>
</dbReference>
<dbReference type="SUPFAM" id="SSF69593">
    <property type="entry name" value="Glycerol-3-phosphate (1)-acyltransferase"/>
    <property type="match status" value="1"/>
</dbReference>
<name>PLSB_BAUCH</name>
<accession>Q1LU65</accession>
<gene>
    <name evidence="1" type="primary">plsB</name>
    <name type="ordered locus">BCI_0020</name>
</gene>
<comment type="catalytic activity">
    <reaction evidence="1">
        <text>sn-glycerol 3-phosphate + an acyl-CoA = a 1-acyl-sn-glycero-3-phosphate + CoA</text>
        <dbReference type="Rhea" id="RHEA:15325"/>
        <dbReference type="ChEBI" id="CHEBI:57287"/>
        <dbReference type="ChEBI" id="CHEBI:57597"/>
        <dbReference type="ChEBI" id="CHEBI:57970"/>
        <dbReference type="ChEBI" id="CHEBI:58342"/>
        <dbReference type="EC" id="2.3.1.15"/>
    </reaction>
</comment>
<comment type="pathway">
    <text evidence="1">Phospholipid metabolism; CDP-diacylglycerol biosynthesis; CDP-diacylglycerol from sn-glycerol 3-phosphate: step 1/3.</text>
</comment>
<comment type="subcellular location">
    <subcellularLocation>
        <location evidence="1">Cell membrane</location>
        <topology evidence="1">Peripheral membrane protein</topology>
        <orientation evidence="1">Cytoplasmic side</orientation>
    </subcellularLocation>
</comment>
<comment type="domain">
    <text evidence="1">The HXXXXD motif is essential for acyltransferase activity and may constitute the binding site for the phosphate moiety of the glycerol-3-phosphate.</text>
</comment>
<comment type="similarity">
    <text evidence="1">Belongs to the GPAT/DAPAT family.</text>
</comment>
<evidence type="ECO:0000255" key="1">
    <source>
        <dbReference type="HAMAP-Rule" id="MF_00393"/>
    </source>
</evidence>
<feature type="chain" id="PRO_1000049428" description="Glycerol-3-phosphate acyltransferase">
    <location>
        <begin position="1"/>
        <end position="821"/>
    </location>
</feature>
<feature type="short sequence motif" description="HXXXXD motif">
    <location>
        <begin position="310"/>
        <end position="315"/>
    </location>
</feature>
<reference key="1">
    <citation type="journal article" date="2006" name="PLoS Biol.">
        <title>Metabolic complementarity and genomics of the dual bacterial symbiosis of sharpshooters.</title>
        <authorList>
            <person name="Wu D."/>
            <person name="Daugherty S.C."/>
            <person name="Van Aken S.E."/>
            <person name="Pai G.H."/>
            <person name="Watkins K.L."/>
            <person name="Khouri H."/>
            <person name="Tallon L.J."/>
            <person name="Zaborsky J.M."/>
            <person name="Dunbar H.E."/>
            <person name="Tran P.L."/>
            <person name="Moran N.A."/>
            <person name="Eisen J.A."/>
        </authorList>
    </citation>
    <scope>NUCLEOTIDE SEQUENCE [LARGE SCALE GENOMIC DNA]</scope>
</reference>
<proteinExistence type="inferred from homology"/>
<sequence>MFNWRAIYNKILYLLLKIVVRSHIIPPKLLAEICLDIQEPMMYVLPYNSKCDLLTLRILCIQYQLPDPLKPIFIXGVRFPRYLFIDQSCHIRSDVTKQQQYGRILHNFITLYRHNSCSNIQILPVWVMFGRCPGKESYKNKKTTSIQFFCLLKKIINVIWLGRDSFIYFSPIGSIPISYIANSNYTINSIMILKLFRLGRIHFLRQKRIAIGPSLLVRKHLFEKLLASQTITKLVEDEARSKKISIKQAQQKALVIIEEIAADFSYETIRLSDRVLSWIWNMLYQGLYVCNADRVRKLAEKGHEIIYLPCHRSHMDYLLLSYILYHEGLVIPYIAAGINLNFWPAGQIFRKLGAFFIHRTFKGHQKLYSAIFREYLYQLFNGGYSVAYFLEGSRSRTGRLQAPKTGTLTITIQSMLHLGKKKPIILVPVYISYEHVIEVASYTKELYGVVKKKEGLIHMISGLRNLRNLGRGYINFGEPLPLLTWLNQQVPQWQDDINSIEGNRPNWLALTVDYLAVTIMTRINNAVAVNAMNLCSSIILASRQYSCSSIVITRTRLLSQLKCYLELLRNVPYDAEVTVPNVTPEDLFQHLITLNQFTIKNNSIIYVSSEKTALITYYRNNIQHLFILPSLLAIIIIAQPGISRKLIHQKLLSLYPLLKVELFMRFSYQELPHVIDLMITELHRQDILYEQQTKIYPVPKRMDELQLLAASGGRETLYRYAITFSLLCSYTRINRYSLEKQSIIIAQHLSKIHSIYALEFIDKTIFSTLITTLRHEGYLSDSGEIHASQAKEIYKFLSALISPEIQTSITNALYHIKTVVN</sequence>